<gene>
    <name evidence="1" type="primary">apaG</name>
    <name type="ordered locus">YPK_3574</name>
</gene>
<accession>B1JKY4</accession>
<feature type="chain" id="PRO_1000133826" description="Protein ApaG">
    <location>
        <begin position="1"/>
        <end position="125"/>
    </location>
</feature>
<feature type="domain" description="ApaG" evidence="1">
    <location>
        <begin position="1"/>
        <end position="125"/>
    </location>
</feature>
<organism>
    <name type="scientific">Yersinia pseudotuberculosis serotype O:3 (strain YPIII)</name>
    <dbReference type="NCBI Taxonomy" id="502800"/>
    <lineage>
        <taxon>Bacteria</taxon>
        <taxon>Pseudomonadati</taxon>
        <taxon>Pseudomonadota</taxon>
        <taxon>Gammaproteobacteria</taxon>
        <taxon>Enterobacterales</taxon>
        <taxon>Yersiniaceae</taxon>
        <taxon>Yersinia</taxon>
    </lineage>
</organism>
<name>APAG_YERPY</name>
<evidence type="ECO:0000255" key="1">
    <source>
        <dbReference type="HAMAP-Rule" id="MF_00791"/>
    </source>
</evidence>
<dbReference type="EMBL" id="CP000950">
    <property type="protein sequence ID" value="ACA69841.1"/>
    <property type="molecule type" value="Genomic_DNA"/>
</dbReference>
<dbReference type="RefSeq" id="WP_011191709.1">
    <property type="nucleotide sequence ID" value="NZ_CP009792.1"/>
</dbReference>
<dbReference type="SMR" id="B1JKY4"/>
<dbReference type="GeneID" id="49787365"/>
<dbReference type="KEGG" id="ypy:YPK_3574"/>
<dbReference type="PATRIC" id="fig|502800.11.peg.4320"/>
<dbReference type="GO" id="GO:0070987">
    <property type="term" value="P:error-free translesion synthesis"/>
    <property type="evidence" value="ECO:0007669"/>
    <property type="project" value="TreeGrafter"/>
</dbReference>
<dbReference type="Gene3D" id="2.60.40.1470">
    <property type="entry name" value="ApaG domain"/>
    <property type="match status" value="1"/>
</dbReference>
<dbReference type="HAMAP" id="MF_00791">
    <property type="entry name" value="ApaG"/>
    <property type="match status" value="1"/>
</dbReference>
<dbReference type="InterPro" id="IPR007474">
    <property type="entry name" value="ApaG_domain"/>
</dbReference>
<dbReference type="InterPro" id="IPR036767">
    <property type="entry name" value="ApaG_sf"/>
</dbReference>
<dbReference type="InterPro" id="IPR023065">
    <property type="entry name" value="Uncharacterised_ApaG"/>
</dbReference>
<dbReference type="NCBIfam" id="NF003967">
    <property type="entry name" value="PRK05461.1"/>
    <property type="match status" value="1"/>
</dbReference>
<dbReference type="PANTHER" id="PTHR14289">
    <property type="entry name" value="F-BOX ONLY PROTEIN 3"/>
    <property type="match status" value="1"/>
</dbReference>
<dbReference type="PANTHER" id="PTHR14289:SF16">
    <property type="entry name" value="POLYMERASE DELTA-INTERACTING PROTEIN 2"/>
    <property type="match status" value="1"/>
</dbReference>
<dbReference type="Pfam" id="PF04379">
    <property type="entry name" value="DUF525"/>
    <property type="match status" value="1"/>
</dbReference>
<dbReference type="SUPFAM" id="SSF110069">
    <property type="entry name" value="ApaG-like"/>
    <property type="match status" value="1"/>
</dbReference>
<dbReference type="PROSITE" id="PS51087">
    <property type="entry name" value="APAG"/>
    <property type="match status" value="1"/>
</dbReference>
<proteinExistence type="inferred from homology"/>
<reference key="1">
    <citation type="submission" date="2008-02" db="EMBL/GenBank/DDBJ databases">
        <title>Complete sequence of Yersinia pseudotuberculosis YPIII.</title>
        <authorList>
            <consortium name="US DOE Joint Genome Institute"/>
            <person name="Copeland A."/>
            <person name="Lucas S."/>
            <person name="Lapidus A."/>
            <person name="Glavina del Rio T."/>
            <person name="Dalin E."/>
            <person name="Tice H."/>
            <person name="Bruce D."/>
            <person name="Goodwin L."/>
            <person name="Pitluck S."/>
            <person name="Munk A.C."/>
            <person name="Brettin T."/>
            <person name="Detter J.C."/>
            <person name="Han C."/>
            <person name="Tapia R."/>
            <person name="Schmutz J."/>
            <person name="Larimer F."/>
            <person name="Land M."/>
            <person name="Hauser L."/>
            <person name="Challacombe J.F."/>
            <person name="Green L."/>
            <person name="Lindler L.E."/>
            <person name="Nikolich M.P."/>
            <person name="Richardson P."/>
        </authorList>
    </citation>
    <scope>NUCLEOTIDE SEQUENCE [LARGE SCALE GENOMIC DNA]</scope>
    <source>
        <strain>YPIII</strain>
    </source>
</reference>
<sequence>MIEQPRICVQVQSIYVETQSIPEEERFVFAYTVTVRNLGRSNVQLLGRYWLITNSNGRQTEVQGEGVIGEQPLILPGNEFQYTSGAVLETPLGTMEGHYEMIDHLGQAFRTVIPVFRLAIPALIH</sequence>
<protein>
    <recommendedName>
        <fullName evidence="1">Protein ApaG</fullName>
    </recommendedName>
</protein>